<sequence>MSVYPECTWLLFVCLCHLLVSAGGSLLLPCEPINETISVEKDGCPKCLVFQTSICSGHCITKDPSYKSPLSTVYQRVCTYRDVRYETVRLPDCRPGVDPHVTFPVALSCDCNLCTMDTSDCAIQSLRPDFCMSQRASLPA</sequence>
<organism>
    <name type="scientific">Anguilla anguilla</name>
    <name type="common">European freshwater eel</name>
    <name type="synonym">Muraena anguilla</name>
    <dbReference type="NCBI Taxonomy" id="7936"/>
    <lineage>
        <taxon>Eukaryota</taxon>
        <taxon>Metazoa</taxon>
        <taxon>Chordata</taxon>
        <taxon>Craniata</taxon>
        <taxon>Vertebrata</taxon>
        <taxon>Euteleostomi</taxon>
        <taxon>Actinopterygii</taxon>
        <taxon>Neopterygii</taxon>
        <taxon>Teleostei</taxon>
        <taxon>Anguilliformes</taxon>
        <taxon>Anguillidae</taxon>
        <taxon>Anguilla</taxon>
    </lineage>
</organism>
<accession>P27767</accession>
<reference key="1">
    <citation type="journal article" date="1990" name="J. Mol. Endocrinol.">
        <title>Molecular cloning and sequence analysis of the cDNA for the putative beta subunit of the type-II gonadotrophin from the European eel.</title>
        <authorList>
            <person name="Querat B."/>
            <person name="Moumni M."/>
            <person name="Jutisz M."/>
            <person name="Fontaine Y.-A."/>
            <person name="Counis R."/>
        </authorList>
    </citation>
    <scope>NUCLEOTIDE SEQUENCE [MRNA]</scope>
    <source>
        <tissue>Pituitary</tissue>
    </source>
</reference>
<protein>
    <recommendedName>
        <fullName>Gonadotropin subunit beta-2</fullName>
    </recommendedName>
    <alternativeName>
        <fullName>GTH-II-beta</fullName>
    </alternativeName>
    <alternativeName>
        <fullName>Gonadotropin beta-II chain</fullName>
    </alternativeName>
</protein>
<name>GTHB2_ANGAN</name>
<gene>
    <name type="primary">cgbb</name>
</gene>
<keyword id="KW-1015">Disulfide bond</keyword>
<keyword id="KW-0325">Glycoprotein</keyword>
<keyword id="KW-0372">Hormone</keyword>
<keyword id="KW-0964">Secreted</keyword>
<keyword id="KW-0732">Signal</keyword>
<dbReference type="EMBL" id="X61039">
    <property type="protein sequence ID" value="CAA43374.1"/>
    <property type="molecule type" value="mRNA"/>
</dbReference>
<dbReference type="PIR" id="A48166">
    <property type="entry name" value="A48166"/>
</dbReference>
<dbReference type="SMR" id="P27767"/>
<dbReference type="GlyCosmos" id="P27767">
    <property type="glycosylation" value="1 site, No reported glycans"/>
</dbReference>
<dbReference type="OMA" id="EACPFCI"/>
<dbReference type="OrthoDB" id="8453657at2759"/>
<dbReference type="GO" id="GO:0005737">
    <property type="term" value="C:cytoplasm"/>
    <property type="evidence" value="ECO:0007669"/>
    <property type="project" value="TreeGrafter"/>
</dbReference>
<dbReference type="GO" id="GO:0005615">
    <property type="term" value="C:extracellular space"/>
    <property type="evidence" value="ECO:0007669"/>
    <property type="project" value="TreeGrafter"/>
</dbReference>
<dbReference type="GO" id="GO:0005179">
    <property type="term" value="F:hormone activity"/>
    <property type="evidence" value="ECO:0007669"/>
    <property type="project" value="UniProtKB-KW"/>
</dbReference>
<dbReference type="GO" id="GO:0007186">
    <property type="term" value="P:G protein-coupled receptor signaling pathway"/>
    <property type="evidence" value="ECO:0007669"/>
    <property type="project" value="TreeGrafter"/>
</dbReference>
<dbReference type="CDD" id="cd00069">
    <property type="entry name" value="GHB_like"/>
    <property type="match status" value="1"/>
</dbReference>
<dbReference type="FunFam" id="2.10.90.10:FF:000007">
    <property type="entry name" value="Luteinizing hormone beta subunit"/>
    <property type="match status" value="1"/>
</dbReference>
<dbReference type="Gene3D" id="2.10.90.10">
    <property type="entry name" value="Cystine-knot cytokines"/>
    <property type="match status" value="1"/>
</dbReference>
<dbReference type="InterPro" id="IPR029034">
    <property type="entry name" value="Cystine-knot_cytokine"/>
</dbReference>
<dbReference type="InterPro" id="IPR006208">
    <property type="entry name" value="Glyco_hormone_CN"/>
</dbReference>
<dbReference type="InterPro" id="IPR001545">
    <property type="entry name" value="Gonadotropin_bsu"/>
</dbReference>
<dbReference type="InterPro" id="IPR018245">
    <property type="entry name" value="Gonadotropin_bsu_CS"/>
</dbReference>
<dbReference type="PANTHER" id="PTHR11515">
    <property type="entry name" value="GLYCOPROTEIN HORMONE BETA CHAIN"/>
    <property type="match status" value="1"/>
</dbReference>
<dbReference type="PANTHER" id="PTHR11515:SF11">
    <property type="entry name" value="LUTROPIN SUBUNIT BETA"/>
    <property type="match status" value="1"/>
</dbReference>
<dbReference type="Pfam" id="PF00007">
    <property type="entry name" value="Cys_knot"/>
    <property type="match status" value="1"/>
</dbReference>
<dbReference type="SMART" id="SM00068">
    <property type="entry name" value="GHB"/>
    <property type="match status" value="1"/>
</dbReference>
<dbReference type="SUPFAM" id="SSF57501">
    <property type="entry name" value="Cystine-knot cytokines"/>
    <property type="match status" value="1"/>
</dbReference>
<dbReference type="PROSITE" id="PS00261">
    <property type="entry name" value="GLYCO_HORMONE_BETA_1"/>
    <property type="match status" value="1"/>
</dbReference>
<dbReference type="PROSITE" id="PS00689">
    <property type="entry name" value="GLYCO_HORMONE_BETA_2"/>
    <property type="match status" value="1"/>
</dbReference>
<proteinExistence type="evidence at transcript level"/>
<evidence type="ECO:0000250" key="1"/>
<evidence type="ECO:0000255" key="2"/>
<evidence type="ECO:0000305" key="3"/>
<comment type="function">
    <text>Involved in gametogenesis and steroidogenesis.</text>
</comment>
<comment type="subunit">
    <text>Heterodimer of an alpha and a beta chain.</text>
</comment>
<comment type="subcellular location">
    <subcellularLocation>
        <location>Secreted</location>
    </subcellularLocation>
</comment>
<comment type="similarity">
    <text evidence="3">Belongs to the glycoprotein hormones subunit beta family.</text>
</comment>
<feature type="signal peptide" evidence="1">
    <location>
        <begin position="1"/>
        <end position="24"/>
    </location>
</feature>
<feature type="chain" id="PRO_0000011680" description="Gonadotropin subunit beta-2">
    <location>
        <begin position="25"/>
        <end position="140"/>
    </location>
</feature>
<feature type="glycosylation site" description="N-linked (GlcNAc...) asparagine" evidence="2">
    <location>
        <position position="34"/>
    </location>
</feature>
<feature type="disulfide bond" evidence="1">
    <location>
        <begin position="30"/>
        <end position="78"/>
    </location>
</feature>
<feature type="disulfide bond" evidence="1">
    <location>
        <begin position="44"/>
        <end position="93"/>
    </location>
</feature>
<feature type="disulfide bond" evidence="1">
    <location>
        <begin position="47"/>
        <end position="131"/>
    </location>
</feature>
<feature type="disulfide bond" evidence="1">
    <location>
        <begin position="55"/>
        <end position="109"/>
    </location>
</feature>
<feature type="disulfide bond" evidence="1">
    <location>
        <begin position="59"/>
        <end position="111"/>
    </location>
</feature>
<feature type="disulfide bond" evidence="1">
    <location>
        <begin position="114"/>
        <end position="121"/>
    </location>
</feature>